<evidence type="ECO:0000255" key="1">
    <source>
        <dbReference type="HAMAP-Rule" id="MF_01045"/>
    </source>
</evidence>
<sequence length="328" mass="35183">MPLHNLTRFPRLEFIGAPTPLEYLPRFSDYLGREIFIKRDDVTPMAMGGNKLRKLEFLAADALREGADTLITAGAIQSNHVRQTAAVAAKLGLHCVALLENPIGTTAENYLTNGNRLLLDLFNTQIEMCDALTDPNTQLEELATRVEAQGFRPYVIPVGGSNALGALGYVESALEIAQQCEGAVNISSVVVASGSAGTHAGLAVGLEHLMPESELIGVTVSRSVADQLPKVVNLQQAIAKELELTASAEILLWDDYFAPGYGVPNDEGMEAVKLLARLEGILLDPVYTGKAMAGLIDGISQKRFKDEGPILFIHTGGAPALFAYHPHV</sequence>
<organism>
    <name type="scientific">Escherichia coli (strain UTI89 / UPEC)</name>
    <dbReference type="NCBI Taxonomy" id="364106"/>
    <lineage>
        <taxon>Bacteria</taxon>
        <taxon>Pseudomonadati</taxon>
        <taxon>Pseudomonadota</taxon>
        <taxon>Gammaproteobacteria</taxon>
        <taxon>Enterobacterales</taxon>
        <taxon>Enterobacteriaceae</taxon>
        <taxon>Escherichia</taxon>
    </lineage>
</organism>
<feature type="chain" id="PRO_1000064262" description="D-cysteine desulfhydrase">
    <location>
        <begin position="1"/>
        <end position="328"/>
    </location>
</feature>
<feature type="modified residue" description="N6-(pyridoxal phosphate)lysine" evidence="1">
    <location>
        <position position="51"/>
    </location>
</feature>
<protein>
    <recommendedName>
        <fullName evidence="1">D-cysteine desulfhydrase</fullName>
        <ecNumber evidence="1">4.4.1.15</ecNumber>
    </recommendedName>
</protein>
<comment type="function">
    <text evidence="1">Catalyzes the alpha,beta-elimination reaction of D-cysteine and of several D-cysteine derivatives. It could be a defense mechanism against D-cysteine.</text>
</comment>
<comment type="catalytic activity">
    <reaction evidence="1">
        <text>D-cysteine + H2O = hydrogen sulfide + pyruvate + NH4(+) + H(+)</text>
        <dbReference type="Rhea" id="RHEA:11268"/>
        <dbReference type="ChEBI" id="CHEBI:15361"/>
        <dbReference type="ChEBI" id="CHEBI:15377"/>
        <dbReference type="ChEBI" id="CHEBI:15378"/>
        <dbReference type="ChEBI" id="CHEBI:28938"/>
        <dbReference type="ChEBI" id="CHEBI:29919"/>
        <dbReference type="ChEBI" id="CHEBI:35236"/>
        <dbReference type="EC" id="4.4.1.15"/>
    </reaction>
</comment>
<comment type="cofactor">
    <cofactor evidence="1">
        <name>pyridoxal 5'-phosphate</name>
        <dbReference type="ChEBI" id="CHEBI:597326"/>
    </cofactor>
</comment>
<comment type="subunit">
    <text evidence="1">Homodimer.</text>
</comment>
<comment type="similarity">
    <text evidence="1">Belongs to the ACC deaminase/D-cysteine desulfhydrase family.</text>
</comment>
<gene>
    <name evidence="1" type="primary">dcyD</name>
    <name type="ordered locus">UTI89_C2120</name>
</gene>
<keyword id="KW-0456">Lyase</keyword>
<keyword id="KW-0663">Pyridoxal phosphate</keyword>
<accession>Q1RAM1</accession>
<name>DCYD_ECOUT</name>
<dbReference type="EC" id="4.4.1.15" evidence="1"/>
<dbReference type="EMBL" id="CP000243">
    <property type="protein sequence ID" value="ABE07593.1"/>
    <property type="molecule type" value="Genomic_DNA"/>
</dbReference>
<dbReference type="RefSeq" id="WP_001128237.1">
    <property type="nucleotide sequence ID" value="NZ_CP064825.1"/>
</dbReference>
<dbReference type="SMR" id="Q1RAM1"/>
<dbReference type="KEGG" id="eci:UTI89_C2120"/>
<dbReference type="HOGENOM" id="CLU_048897_1_0_6"/>
<dbReference type="Proteomes" id="UP000001952">
    <property type="component" value="Chromosome"/>
</dbReference>
<dbReference type="GO" id="GO:0019148">
    <property type="term" value="F:D-cysteine desulfhydrase activity"/>
    <property type="evidence" value="ECO:0007669"/>
    <property type="project" value="UniProtKB-UniRule"/>
</dbReference>
<dbReference type="GO" id="GO:0046416">
    <property type="term" value="P:D-amino acid metabolic process"/>
    <property type="evidence" value="ECO:0007669"/>
    <property type="project" value="UniProtKB-UniRule"/>
</dbReference>
<dbReference type="CDD" id="cd06449">
    <property type="entry name" value="ACCD"/>
    <property type="match status" value="1"/>
</dbReference>
<dbReference type="FunFam" id="3.40.50.1100:FF:000019">
    <property type="entry name" value="D-cysteine desulfhydrase"/>
    <property type="match status" value="1"/>
</dbReference>
<dbReference type="Gene3D" id="3.40.50.1100">
    <property type="match status" value="2"/>
</dbReference>
<dbReference type="HAMAP" id="MF_01045">
    <property type="entry name" value="D_Cys_desulfhydr"/>
    <property type="match status" value="1"/>
</dbReference>
<dbReference type="InterPro" id="IPR027278">
    <property type="entry name" value="ACCD_DCysDesulf"/>
</dbReference>
<dbReference type="InterPro" id="IPR005966">
    <property type="entry name" value="D-Cys_desShydrase"/>
</dbReference>
<dbReference type="InterPro" id="IPR023702">
    <property type="entry name" value="D_Cys_desulphydr_bac"/>
</dbReference>
<dbReference type="InterPro" id="IPR001926">
    <property type="entry name" value="TrpB-like_PALP"/>
</dbReference>
<dbReference type="InterPro" id="IPR036052">
    <property type="entry name" value="TrpB-like_PALP_sf"/>
</dbReference>
<dbReference type="NCBIfam" id="TIGR01275">
    <property type="entry name" value="ACC_deam_rel"/>
    <property type="match status" value="1"/>
</dbReference>
<dbReference type="NCBIfam" id="NF003029">
    <property type="entry name" value="PRK03910.1-1"/>
    <property type="match status" value="1"/>
</dbReference>
<dbReference type="NCBIfam" id="NF003030">
    <property type="entry name" value="PRK03910.1-3"/>
    <property type="match status" value="1"/>
</dbReference>
<dbReference type="NCBIfam" id="NF003032">
    <property type="entry name" value="PRK03910.1-5"/>
    <property type="match status" value="1"/>
</dbReference>
<dbReference type="PANTHER" id="PTHR43780">
    <property type="entry name" value="1-AMINOCYCLOPROPANE-1-CARBOXYLATE DEAMINASE-RELATED"/>
    <property type="match status" value="1"/>
</dbReference>
<dbReference type="PANTHER" id="PTHR43780:SF2">
    <property type="entry name" value="1-AMINOCYCLOPROPANE-1-CARBOXYLATE DEAMINASE-RELATED"/>
    <property type="match status" value="1"/>
</dbReference>
<dbReference type="Pfam" id="PF00291">
    <property type="entry name" value="PALP"/>
    <property type="match status" value="1"/>
</dbReference>
<dbReference type="PIRSF" id="PIRSF006278">
    <property type="entry name" value="ACCD_DCysDesulf"/>
    <property type="match status" value="1"/>
</dbReference>
<dbReference type="SUPFAM" id="SSF53686">
    <property type="entry name" value="Tryptophan synthase beta subunit-like PLP-dependent enzymes"/>
    <property type="match status" value="1"/>
</dbReference>
<proteinExistence type="inferred from homology"/>
<reference key="1">
    <citation type="journal article" date="2006" name="Proc. Natl. Acad. Sci. U.S.A.">
        <title>Identification of genes subject to positive selection in uropathogenic strains of Escherichia coli: a comparative genomics approach.</title>
        <authorList>
            <person name="Chen S.L."/>
            <person name="Hung C.-S."/>
            <person name="Xu J."/>
            <person name="Reigstad C.S."/>
            <person name="Magrini V."/>
            <person name="Sabo A."/>
            <person name="Blasiar D."/>
            <person name="Bieri T."/>
            <person name="Meyer R.R."/>
            <person name="Ozersky P."/>
            <person name="Armstrong J.R."/>
            <person name="Fulton R.S."/>
            <person name="Latreille J.P."/>
            <person name="Spieth J."/>
            <person name="Hooton T.M."/>
            <person name="Mardis E.R."/>
            <person name="Hultgren S.J."/>
            <person name="Gordon J.I."/>
        </authorList>
    </citation>
    <scope>NUCLEOTIDE SEQUENCE [LARGE SCALE GENOMIC DNA]</scope>
    <source>
        <strain>UTI89 / UPEC</strain>
    </source>
</reference>